<evidence type="ECO:0000255" key="1">
    <source>
        <dbReference type="HAMAP-Rule" id="MF_01200"/>
    </source>
</evidence>
<gene>
    <name evidence="1" type="primary">pyrF</name>
    <name type="ordered locus">BH2533</name>
</gene>
<protein>
    <recommendedName>
        <fullName evidence="1">Orotidine 5'-phosphate decarboxylase</fullName>
        <ecNumber evidence="1">4.1.1.23</ecNumber>
    </recommendedName>
    <alternativeName>
        <fullName evidence="1">OMP decarboxylase</fullName>
        <shortName evidence="1">OMPDCase</shortName>
        <shortName evidence="1">OMPdecase</shortName>
    </alternativeName>
</protein>
<name>PYRF_HALH5</name>
<accession>Q9K9W2</accession>
<sequence>MIRPLIIALDVENRQNMQELLKTLPKPLFVKVGMELFYSEGPAVIEQLKDEGHQVFLDLKLHDIPNTVKRAMRQLATLGVDIVNVHVAGGVNMMAAAREGLEAGTVDGRNRPKLIGVTQLTSTNEAMLQKELLIQSNMNGAVSHYARLAKEAGLDGVVSSAQEVPIIHEHCGPSFLTVTPGIRLKEDDKGDQTRIVTPEEARTLGSWAIVVGRSITAAPDPAAAYEIIRKQWEG</sequence>
<comment type="function">
    <text evidence="1">Catalyzes the decarboxylation of orotidine 5'-monophosphate (OMP) to uridine 5'-monophosphate (UMP).</text>
</comment>
<comment type="catalytic activity">
    <reaction evidence="1">
        <text>orotidine 5'-phosphate + H(+) = UMP + CO2</text>
        <dbReference type="Rhea" id="RHEA:11596"/>
        <dbReference type="ChEBI" id="CHEBI:15378"/>
        <dbReference type="ChEBI" id="CHEBI:16526"/>
        <dbReference type="ChEBI" id="CHEBI:57538"/>
        <dbReference type="ChEBI" id="CHEBI:57865"/>
        <dbReference type="EC" id="4.1.1.23"/>
    </reaction>
</comment>
<comment type="pathway">
    <text evidence="1">Pyrimidine metabolism; UMP biosynthesis via de novo pathway; UMP from orotate: step 2/2.</text>
</comment>
<comment type="subunit">
    <text evidence="1">Homodimer.</text>
</comment>
<comment type="similarity">
    <text evidence="1">Belongs to the OMP decarboxylase family. Type 1 subfamily.</text>
</comment>
<organism>
    <name type="scientific">Halalkalibacterium halodurans (strain ATCC BAA-125 / DSM 18197 / FERM 7344 / JCM 9153 / C-125)</name>
    <name type="common">Bacillus halodurans</name>
    <dbReference type="NCBI Taxonomy" id="272558"/>
    <lineage>
        <taxon>Bacteria</taxon>
        <taxon>Bacillati</taxon>
        <taxon>Bacillota</taxon>
        <taxon>Bacilli</taxon>
        <taxon>Bacillales</taxon>
        <taxon>Bacillaceae</taxon>
        <taxon>Halalkalibacterium (ex Joshi et al. 2022)</taxon>
    </lineage>
</organism>
<dbReference type="EC" id="4.1.1.23" evidence="1"/>
<dbReference type="EMBL" id="BA000004">
    <property type="protein sequence ID" value="BAB06252.1"/>
    <property type="molecule type" value="Genomic_DNA"/>
</dbReference>
<dbReference type="PIR" id="E83966">
    <property type="entry name" value="E83966"/>
</dbReference>
<dbReference type="RefSeq" id="WP_010898684.1">
    <property type="nucleotide sequence ID" value="NC_002570.2"/>
</dbReference>
<dbReference type="SMR" id="Q9K9W2"/>
<dbReference type="STRING" id="272558.gene:10728431"/>
<dbReference type="KEGG" id="bha:BH2533"/>
<dbReference type="eggNOG" id="COG0284">
    <property type="taxonomic scope" value="Bacteria"/>
</dbReference>
<dbReference type="HOGENOM" id="CLU_067069_1_1_9"/>
<dbReference type="OrthoDB" id="9806203at2"/>
<dbReference type="UniPathway" id="UPA00070">
    <property type="reaction ID" value="UER00120"/>
</dbReference>
<dbReference type="Proteomes" id="UP000001258">
    <property type="component" value="Chromosome"/>
</dbReference>
<dbReference type="GO" id="GO:0005829">
    <property type="term" value="C:cytosol"/>
    <property type="evidence" value="ECO:0007669"/>
    <property type="project" value="TreeGrafter"/>
</dbReference>
<dbReference type="GO" id="GO:0004590">
    <property type="term" value="F:orotidine-5'-phosphate decarboxylase activity"/>
    <property type="evidence" value="ECO:0007669"/>
    <property type="project" value="UniProtKB-UniRule"/>
</dbReference>
<dbReference type="GO" id="GO:0006207">
    <property type="term" value="P:'de novo' pyrimidine nucleobase biosynthetic process"/>
    <property type="evidence" value="ECO:0007669"/>
    <property type="project" value="InterPro"/>
</dbReference>
<dbReference type="GO" id="GO:0044205">
    <property type="term" value="P:'de novo' UMP biosynthetic process"/>
    <property type="evidence" value="ECO:0007669"/>
    <property type="project" value="UniProtKB-UniRule"/>
</dbReference>
<dbReference type="CDD" id="cd04725">
    <property type="entry name" value="OMP_decarboxylase_like"/>
    <property type="match status" value="1"/>
</dbReference>
<dbReference type="FunFam" id="3.20.20.70:FF:000015">
    <property type="entry name" value="Orotidine 5'-phosphate decarboxylase"/>
    <property type="match status" value="1"/>
</dbReference>
<dbReference type="Gene3D" id="3.20.20.70">
    <property type="entry name" value="Aldolase class I"/>
    <property type="match status" value="1"/>
</dbReference>
<dbReference type="HAMAP" id="MF_01200_B">
    <property type="entry name" value="OMPdecase_type1_B"/>
    <property type="match status" value="1"/>
</dbReference>
<dbReference type="InterPro" id="IPR013785">
    <property type="entry name" value="Aldolase_TIM"/>
</dbReference>
<dbReference type="InterPro" id="IPR014732">
    <property type="entry name" value="OMPdecase"/>
</dbReference>
<dbReference type="InterPro" id="IPR018089">
    <property type="entry name" value="OMPdecase_AS"/>
</dbReference>
<dbReference type="InterPro" id="IPR047596">
    <property type="entry name" value="OMPdecase_bac"/>
</dbReference>
<dbReference type="InterPro" id="IPR001754">
    <property type="entry name" value="OMPdeCOase_dom"/>
</dbReference>
<dbReference type="InterPro" id="IPR011060">
    <property type="entry name" value="RibuloseP-bd_barrel"/>
</dbReference>
<dbReference type="NCBIfam" id="NF001273">
    <property type="entry name" value="PRK00230.1"/>
    <property type="match status" value="1"/>
</dbReference>
<dbReference type="NCBIfam" id="TIGR01740">
    <property type="entry name" value="pyrF"/>
    <property type="match status" value="1"/>
</dbReference>
<dbReference type="PANTHER" id="PTHR32119">
    <property type="entry name" value="OROTIDINE 5'-PHOSPHATE DECARBOXYLASE"/>
    <property type="match status" value="1"/>
</dbReference>
<dbReference type="PANTHER" id="PTHR32119:SF2">
    <property type="entry name" value="OROTIDINE 5'-PHOSPHATE DECARBOXYLASE"/>
    <property type="match status" value="1"/>
</dbReference>
<dbReference type="Pfam" id="PF00215">
    <property type="entry name" value="OMPdecase"/>
    <property type="match status" value="1"/>
</dbReference>
<dbReference type="SMART" id="SM00934">
    <property type="entry name" value="OMPdecase"/>
    <property type="match status" value="1"/>
</dbReference>
<dbReference type="SUPFAM" id="SSF51366">
    <property type="entry name" value="Ribulose-phoshate binding barrel"/>
    <property type="match status" value="1"/>
</dbReference>
<dbReference type="PROSITE" id="PS00156">
    <property type="entry name" value="OMPDECASE"/>
    <property type="match status" value="1"/>
</dbReference>
<keyword id="KW-0210">Decarboxylase</keyword>
<keyword id="KW-0456">Lyase</keyword>
<keyword id="KW-0665">Pyrimidine biosynthesis</keyword>
<keyword id="KW-1185">Reference proteome</keyword>
<feature type="chain" id="PRO_0000134526" description="Orotidine 5'-phosphate decarboxylase">
    <location>
        <begin position="1"/>
        <end position="234"/>
    </location>
</feature>
<feature type="active site" description="Proton donor" evidence="1">
    <location>
        <position position="60"/>
    </location>
</feature>
<feature type="binding site" evidence="1">
    <location>
        <position position="10"/>
    </location>
    <ligand>
        <name>substrate</name>
    </ligand>
</feature>
<feature type="binding site" evidence="1">
    <location>
        <position position="31"/>
    </location>
    <ligand>
        <name>substrate</name>
    </ligand>
</feature>
<feature type="binding site" evidence="1">
    <location>
        <begin position="58"/>
        <end position="67"/>
    </location>
    <ligand>
        <name>substrate</name>
    </ligand>
</feature>
<feature type="binding site" evidence="1">
    <location>
        <position position="121"/>
    </location>
    <ligand>
        <name>substrate</name>
    </ligand>
</feature>
<feature type="binding site" evidence="1">
    <location>
        <position position="183"/>
    </location>
    <ligand>
        <name>substrate</name>
    </ligand>
</feature>
<feature type="binding site" evidence="1">
    <location>
        <position position="192"/>
    </location>
    <ligand>
        <name>substrate</name>
    </ligand>
</feature>
<feature type="binding site" evidence="1">
    <location>
        <position position="212"/>
    </location>
    <ligand>
        <name>substrate</name>
    </ligand>
</feature>
<feature type="binding site" evidence="1">
    <location>
        <position position="213"/>
    </location>
    <ligand>
        <name>substrate</name>
    </ligand>
</feature>
<reference key="1">
    <citation type="journal article" date="2000" name="Nucleic Acids Res.">
        <title>Complete genome sequence of the alkaliphilic bacterium Bacillus halodurans and genomic sequence comparison with Bacillus subtilis.</title>
        <authorList>
            <person name="Takami H."/>
            <person name="Nakasone K."/>
            <person name="Takaki Y."/>
            <person name="Maeno G."/>
            <person name="Sasaki R."/>
            <person name="Masui N."/>
            <person name="Fuji F."/>
            <person name="Hirama C."/>
            <person name="Nakamura Y."/>
            <person name="Ogasawara N."/>
            <person name="Kuhara S."/>
            <person name="Horikoshi K."/>
        </authorList>
    </citation>
    <scope>NUCLEOTIDE SEQUENCE [LARGE SCALE GENOMIC DNA]</scope>
    <source>
        <strain>ATCC BAA-125 / DSM 18197 / FERM 7344 / JCM 9153 / C-125</strain>
    </source>
</reference>
<proteinExistence type="inferred from homology"/>